<accession>B5BCL1</accession>
<protein>
    <recommendedName>
        <fullName evidence="1">UPF0304 protein YfbU</fullName>
    </recommendedName>
</protein>
<dbReference type="EMBL" id="FM200053">
    <property type="protein sequence ID" value="CAR58622.1"/>
    <property type="molecule type" value="Genomic_DNA"/>
</dbReference>
<dbReference type="RefSeq" id="WP_000426135.1">
    <property type="nucleotide sequence ID" value="NC_011147.1"/>
</dbReference>
<dbReference type="SMR" id="B5BCL1"/>
<dbReference type="KEGG" id="sek:SSPA0493"/>
<dbReference type="HOGENOM" id="CLU_101021_1_0_6"/>
<dbReference type="Proteomes" id="UP000001869">
    <property type="component" value="Chromosome"/>
</dbReference>
<dbReference type="FunFam" id="1.10.3190.10:FF:000001">
    <property type="entry name" value="UPF0304 protein YfbU"/>
    <property type="match status" value="1"/>
</dbReference>
<dbReference type="Gene3D" id="1.10.287.680">
    <property type="entry name" value="Helix hairpin bin"/>
    <property type="match status" value="1"/>
</dbReference>
<dbReference type="Gene3D" id="1.10.3190.10">
    <property type="entry name" value="yfbu gene product, domain 2"/>
    <property type="match status" value="1"/>
</dbReference>
<dbReference type="HAMAP" id="MF_00762">
    <property type="entry name" value="UPF0304"/>
    <property type="match status" value="1"/>
</dbReference>
<dbReference type="InterPro" id="IPR005587">
    <property type="entry name" value="UPF0304_YfbU"/>
</dbReference>
<dbReference type="InterPro" id="IPR023146">
    <property type="entry name" value="YfbU_alpha-helical_sf"/>
</dbReference>
<dbReference type="InterPro" id="IPR023145">
    <property type="entry name" value="YfbU_helix-hairpin_sf"/>
</dbReference>
<dbReference type="NCBIfam" id="NF003936">
    <property type="entry name" value="PRK05445.1"/>
    <property type="match status" value="1"/>
</dbReference>
<dbReference type="Pfam" id="PF03887">
    <property type="entry name" value="YfbU"/>
    <property type="match status" value="1"/>
</dbReference>
<dbReference type="PIRSF" id="PIRSF006272">
    <property type="entry name" value="UCP006272"/>
    <property type="match status" value="1"/>
</dbReference>
<dbReference type="SUPFAM" id="SSF116960">
    <property type="entry name" value="YfbU-like"/>
    <property type="match status" value="1"/>
</dbReference>
<comment type="similarity">
    <text evidence="1">Belongs to the UPF0304 family.</text>
</comment>
<feature type="chain" id="PRO_1000198345" description="UPF0304 protein YfbU">
    <location>
        <begin position="1"/>
        <end position="164"/>
    </location>
</feature>
<reference key="1">
    <citation type="journal article" date="2009" name="BMC Genomics">
        <title>Pseudogene accumulation in the evolutionary histories of Salmonella enterica serovars Paratyphi A and Typhi.</title>
        <authorList>
            <person name="Holt K.E."/>
            <person name="Thomson N.R."/>
            <person name="Wain J."/>
            <person name="Langridge G.C."/>
            <person name="Hasan R."/>
            <person name="Bhutta Z.A."/>
            <person name="Quail M.A."/>
            <person name="Norbertczak H."/>
            <person name="Walker D."/>
            <person name="Simmonds M."/>
            <person name="White B."/>
            <person name="Bason N."/>
            <person name="Mungall K."/>
            <person name="Dougan G."/>
            <person name="Parkhill J."/>
        </authorList>
    </citation>
    <scope>NUCLEOTIDE SEQUENCE [LARGE SCALE GENOMIC DNA]</scope>
    <source>
        <strain>AKU_12601</strain>
    </source>
</reference>
<gene>
    <name evidence="1" type="primary">yfbU</name>
    <name type="ordered locus">SSPA0493</name>
</gene>
<sequence>MEMTNAQRLILSNQYKMMTMLDPTNAERYRRLQTIIERGYGLQMRELDREFGELTEETCRTIIDIMEMYHALHVSWTNLKDTQAIDERRVTFLGFDAATEARYLGYVRFMVNIEGRYTHFDAGTHGFNAQTPMWEKYQRMLNVWHACPRQYHLSANEINQIINA</sequence>
<evidence type="ECO:0000255" key="1">
    <source>
        <dbReference type="HAMAP-Rule" id="MF_00762"/>
    </source>
</evidence>
<organism>
    <name type="scientific">Salmonella paratyphi A (strain AKU_12601)</name>
    <dbReference type="NCBI Taxonomy" id="554290"/>
    <lineage>
        <taxon>Bacteria</taxon>
        <taxon>Pseudomonadati</taxon>
        <taxon>Pseudomonadota</taxon>
        <taxon>Gammaproteobacteria</taxon>
        <taxon>Enterobacterales</taxon>
        <taxon>Enterobacteriaceae</taxon>
        <taxon>Salmonella</taxon>
    </lineage>
</organism>
<name>YFBU_SALPK</name>
<proteinExistence type="inferred from homology"/>